<reference key="1">
    <citation type="journal article" date="1995" name="Science">
        <title>Whole-genome random sequencing and assembly of Haemophilus influenzae Rd.</title>
        <authorList>
            <person name="Fleischmann R.D."/>
            <person name="Adams M.D."/>
            <person name="White O."/>
            <person name="Clayton R.A."/>
            <person name="Kirkness E.F."/>
            <person name="Kerlavage A.R."/>
            <person name="Bult C.J."/>
            <person name="Tomb J.-F."/>
            <person name="Dougherty B.A."/>
            <person name="Merrick J.M."/>
            <person name="McKenney K."/>
            <person name="Sutton G.G."/>
            <person name="FitzHugh W."/>
            <person name="Fields C.A."/>
            <person name="Gocayne J.D."/>
            <person name="Scott J.D."/>
            <person name="Shirley R."/>
            <person name="Liu L.-I."/>
            <person name="Glodek A."/>
            <person name="Kelley J.M."/>
            <person name="Weidman J.F."/>
            <person name="Phillips C.A."/>
            <person name="Spriggs T."/>
            <person name="Hedblom E."/>
            <person name="Cotton M.D."/>
            <person name="Utterback T.R."/>
            <person name="Hanna M.C."/>
            <person name="Nguyen D.T."/>
            <person name="Saudek D.M."/>
            <person name="Brandon R.C."/>
            <person name="Fine L.D."/>
            <person name="Fritchman J.L."/>
            <person name="Fuhrmann J.L."/>
            <person name="Geoghagen N.S.M."/>
            <person name="Gnehm C.L."/>
            <person name="McDonald L.A."/>
            <person name="Small K.V."/>
            <person name="Fraser C.M."/>
            <person name="Smith H.O."/>
            <person name="Venter J.C."/>
        </authorList>
    </citation>
    <scope>NUCLEOTIDE SEQUENCE [LARGE SCALE GENOMIC DNA]</scope>
    <source>
        <strain>ATCC 51907 / DSM 11121 / KW20 / Rd</strain>
    </source>
</reference>
<reference key="2">
    <citation type="journal article" date="2000" name="Electrophoresis">
        <title>Two-dimensional map of the proteome of Haemophilus influenzae.</title>
        <authorList>
            <person name="Langen H."/>
            <person name="Takacs B."/>
            <person name="Evers S."/>
            <person name="Berndt P."/>
            <person name="Lahm H.W."/>
            <person name="Wipf B."/>
            <person name="Gray C."/>
            <person name="Fountoulakis M."/>
        </authorList>
    </citation>
    <scope>IDENTIFICATION BY MASS SPECTROMETRY</scope>
    <source>
        <strain>ATCC 51907 / DSM 11121 / KW20 / Rd</strain>
    </source>
</reference>
<dbReference type="EMBL" id="L42023">
    <property type="protein sequence ID" value="AAC23327.1"/>
    <property type="molecule type" value="Genomic_DNA"/>
</dbReference>
<dbReference type="PIR" id="C64040">
    <property type="entry name" value="C64040"/>
</dbReference>
<dbReference type="RefSeq" id="NP_439823.1">
    <property type="nucleotide sequence ID" value="NC_000907.1"/>
</dbReference>
<dbReference type="STRING" id="71421.HI_1681"/>
<dbReference type="EnsemblBacteria" id="AAC23327">
    <property type="protein sequence ID" value="AAC23327"/>
    <property type="gene ID" value="HI_1681"/>
</dbReference>
<dbReference type="KEGG" id="hin:HI_1681"/>
<dbReference type="PATRIC" id="fig|71421.8.peg.1760"/>
<dbReference type="eggNOG" id="COG3110">
    <property type="taxonomic scope" value="Bacteria"/>
</dbReference>
<dbReference type="HOGENOM" id="CLU_073782_2_0_6"/>
<dbReference type="OrthoDB" id="6428208at2"/>
<dbReference type="PhylomeDB" id="P44290"/>
<dbReference type="BioCyc" id="HINF71421:G1GJ1-1697-MONOMER"/>
<dbReference type="Proteomes" id="UP000000579">
    <property type="component" value="Chromosome"/>
</dbReference>
<dbReference type="HAMAP" id="MF_00789">
    <property type="entry name" value="UPF0319"/>
    <property type="match status" value="1"/>
</dbReference>
<dbReference type="InterPro" id="IPR018635">
    <property type="entry name" value="UPF0319"/>
</dbReference>
<dbReference type="NCBIfam" id="NF002516">
    <property type="entry name" value="PRK01904.1"/>
    <property type="match status" value="1"/>
</dbReference>
<dbReference type="PANTHER" id="PTHR38108">
    <property type="entry name" value="UPF0319 PROTEIN YCCT"/>
    <property type="match status" value="1"/>
</dbReference>
<dbReference type="PANTHER" id="PTHR38108:SF1">
    <property type="entry name" value="UPF0319 PROTEIN YCCT"/>
    <property type="match status" value="1"/>
</dbReference>
<dbReference type="Pfam" id="PF09829">
    <property type="entry name" value="DUF2057"/>
    <property type="match status" value="1"/>
</dbReference>
<keyword id="KW-1185">Reference proteome</keyword>
<keyword id="KW-0732">Signal</keyword>
<sequence length="221" mass="23395">MKLRAVVLGLATLCTSTATFAGMVSTSSNLEFLAIDGQKASKSLGKAKTFTVDDTQNHQVVVRLNEIVGSGSNQSLFESNPVIVTFQGNAEDLVISAPVIRNLDSGDKFNQMPNITVKTKSGNAISAKVDVLKQEGLFPSGNVLNDLAEYNASGAAASVSKFAATTVASSVAVAPAGNAKANKGKVVVQGENVAEQQLQYWFQQADKETQTRFLNWAKSHK</sequence>
<feature type="signal peptide" evidence="1">
    <location>
        <begin position="1"/>
        <end position="21"/>
    </location>
</feature>
<feature type="chain" id="PRO_0000036297" description="UPF0319 protein HI_1681">
    <location>
        <begin position="22"/>
        <end position="221"/>
    </location>
</feature>
<evidence type="ECO:0000255" key="1"/>
<evidence type="ECO:0000305" key="2"/>
<organism>
    <name type="scientific">Haemophilus influenzae (strain ATCC 51907 / DSM 11121 / KW20 / Rd)</name>
    <dbReference type="NCBI Taxonomy" id="71421"/>
    <lineage>
        <taxon>Bacteria</taxon>
        <taxon>Pseudomonadati</taxon>
        <taxon>Pseudomonadota</taxon>
        <taxon>Gammaproteobacteria</taxon>
        <taxon>Pasteurellales</taxon>
        <taxon>Pasteurellaceae</taxon>
        <taxon>Haemophilus</taxon>
    </lineage>
</organism>
<proteinExistence type="evidence at protein level"/>
<comment type="similarity">
    <text evidence="2">Belongs to the UPF0319 family.</text>
</comment>
<gene>
    <name type="ordered locus">HI_1681</name>
</gene>
<name>Y1681_HAEIN</name>
<protein>
    <recommendedName>
        <fullName>UPF0319 protein HI_1681</fullName>
    </recommendedName>
</protein>
<accession>P44290</accession>